<name>OS25_PLARE</name>
<protein>
    <recommendedName>
        <fullName>25 kDa ookinete surface antigen</fullName>
    </recommendedName>
    <alternativeName>
        <fullName>Prs25</fullName>
    </alternativeName>
</protein>
<keyword id="KW-1003">Cell membrane</keyword>
<keyword id="KW-1015">Disulfide bond</keyword>
<keyword id="KW-0245">EGF-like domain</keyword>
<keyword id="KW-0325">Glycoprotein</keyword>
<keyword id="KW-0336">GPI-anchor</keyword>
<keyword id="KW-0449">Lipoprotein</keyword>
<keyword id="KW-0461">Malaria</keyword>
<keyword id="KW-0472">Membrane</keyword>
<keyword id="KW-0677">Repeat</keyword>
<keyword id="KW-0732">Signal</keyword>
<proteinExistence type="evidence at transcript level"/>
<sequence>MNKLYSLFLFLFIQLSIKYYNAKVTVDTVCKKGFLIQMSGHLECKCENDLVLVNEETCEEKVLKCDETTVNKPCGDFSKCIKIDGSPISYACKCNPGYDMVNNVCILNECKNVTCGNGKCILDTSNPVKTGVCSCNIGKVPNADDKNKCSKDGETKCSLKCLKENETCKAVDGIYKCDCKDGFIMDNESSTCTAFSVYNILNLSLIFVLFSVCFFIM</sequence>
<reference key="1">
    <citation type="journal article" date="1990" name="Mol. Biochem. Parasitol.">
        <title>Primary structure of the 25-kilodalton ookinete antigen from Plasmodium reichenowi.</title>
        <authorList>
            <person name="Lal A.A."/>
            <person name="Goldman I.F."/>
            <person name="Campbell G.H."/>
        </authorList>
    </citation>
    <scope>NUCLEOTIDE SEQUENCE [GENOMIC DNA]</scope>
</reference>
<organism>
    <name type="scientific">Plasmodium reichenowi</name>
    <dbReference type="NCBI Taxonomy" id="5854"/>
    <lineage>
        <taxon>Eukaryota</taxon>
        <taxon>Sar</taxon>
        <taxon>Alveolata</taxon>
        <taxon>Apicomplexa</taxon>
        <taxon>Aconoidasida</taxon>
        <taxon>Haemosporida</taxon>
        <taxon>Plasmodiidae</taxon>
        <taxon>Plasmodium</taxon>
        <taxon>Plasmodium (Laverania)</taxon>
    </lineage>
</organism>
<accession>P19455</accession>
<evidence type="ECO:0000250" key="1"/>
<evidence type="ECO:0000255" key="2"/>
<evidence type="ECO:0000305" key="3"/>
<feature type="signal peptide" evidence="1">
    <location>
        <begin position="1"/>
        <end position="16"/>
    </location>
</feature>
<feature type="chain" id="PRO_0000024571" description="25 kDa ookinete surface antigen">
    <location>
        <begin position="17"/>
        <end position="196"/>
    </location>
</feature>
<feature type="propeptide" id="PRO_0000024572" description="Removed in mature form" evidence="2">
    <location>
        <begin position="197"/>
        <end position="217"/>
    </location>
</feature>
<feature type="domain" description="EGF-like 1; truncated">
    <location>
        <begin position="30"/>
        <end position="59"/>
    </location>
</feature>
<feature type="domain" description="EGF-like 2">
    <location>
        <begin position="61"/>
        <end position="106"/>
    </location>
</feature>
<feature type="domain" description="EGF-like 3">
    <location>
        <begin position="106"/>
        <end position="150"/>
    </location>
</feature>
<feature type="domain" description="EGF-like 4">
    <location>
        <begin position="153"/>
        <end position="193"/>
    </location>
</feature>
<feature type="lipid moiety-binding region" description="GPI-anchor amidated serine" evidence="2">
    <location>
        <position position="196"/>
    </location>
</feature>
<feature type="glycosylation site" description="N-linked (GlcNAc...) asparagine" evidence="2">
    <location>
        <position position="112"/>
    </location>
</feature>
<feature type="glycosylation site" description="N-linked (GlcNAc...) asparagine" evidence="2">
    <location>
        <position position="165"/>
    </location>
</feature>
<feature type="glycosylation site" description="N-linked (GlcNAc...) asparagine" evidence="2">
    <location>
        <position position="187"/>
    </location>
</feature>
<feature type="glycosylation site" description="N-linked (GlcNAc...) asparagine" evidence="2">
    <location>
        <position position="202"/>
    </location>
</feature>
<feature type="disulfide bond" evidence="1">
    <location>
        <begin position="65"/>
        <end position="80"/>
    </location>
</feature>
<feature type="disulfide bond" evidence="1">
    <location>
        <begin position="74"/>
        <end position="92"/>
    </location>
</feature>
<feature type="disulfide bond" evidence="1">
    <location>
        <begin position="94"/>
        <end position="105"/>
    </location>
</feature>
<feature type="disulfide bond" evidence="1">
    <location>
        <begin position="110"/>
        <end position="120"/>
    </location>
</feature>
<feature type="disulfide bond" evidence="1">
    <location>
        <begin position="115"/>
        <end position="133"/>
    </location>
</feature>
<feature type="disulfide bond" evidence="1">
    <location>
        <begin position="135"/>
        <end position="149"/>
    </location>
</feature>
<feature type="disulfide bond" evidence="1">
    <location>
        <begin position="157"/>
        <end position="168"/>
    </location>
</feature>
<feature type="disulfide bond" evidence="1">
    <location>
        <begin position="161"/>
        <end position="177"/>
    </location>
</feature>
<feature type="disulfide bond" evidence="1">
    <location>
        <begin position="179"/>
        <end position="192"/>
    </location>
</feature>
<dbReference type="EMBL" id="M36915">
    <property type="protein sequence ID" value="AAA29455.1"/>
    <property type="molecule type" value="Genomic_DNA"/>
</dbReference>
<dbReference type="PIR" id="A44966">
    <property type="entry name" value="A44966"/>
</dbReference>
<dbReference type="SMR" id="P19455"/>
<dbReference type="VEuPathDB" id="PlasmoDB:PRCDC_1030300"/>
<dbReference type="VEuPathDB" id="PlasmoDB:PRG01_1029500"/>
<dbReference type="PhylomeDB" id="P19455"/>
<dbReference type="GO" id="GO:0009986">
    <property type="term" value="C:cell surface"/>
    <property type="evidence" value="ECO:0007669"/>
    <property type="project" value="InterPro"/>
</dbReference>
<dbReference type="GO" id="GO:0005886">
    <property type="term" value="C:plasma membrane"/>
    <property type="evidence" value="ECO:0007669"/>
    <property type="project" value="UniProtKB-SubCell"/>
</dbReference>
<dbReference type="GO" id="GO:0098552">
    <property type="term" value="C:side of membrane"/>
    <property type="evidence" value="ECO:0007669"/>
    <property type="project" value="UniProtKB-KW"/>
</dbReference>
<dbReference type="Gene3D" id="2.90.20.10">
    <property type="entry name" value="Plasmodium vivax P25 domain"/>
    <property type="match status" value="1"/>
</dbReference>
<dbReference type="InterPro" id="IPR000742">
    <property type="entry name" value="EGF-like_dom"/>
</dbReference>
<dbReference type="InterPro" id="IPR010423">
    <property type="entry name" value="Pvs25/Psv28_EGF"/>
</dbReference>
<dbReference type="Pfam" id="PF06247">
    <property type="entry name" value="Plasmod_Pvs28"/>
    <property type="match status" value="4"/>
</dbReference>
<dbReference type="SMART" id="SM00181">
    <property type="entry name" value="EGF"/>
    <property type="match status" value="3"/>
</dbReference>
<dbReference type="PROSITE" id="PS01186">
    <property type="entry name" value="EGF_2"/>
    <property type="match status" value="2"/>
</dbReference>
<comment type="subcellular location">
    <subcellularLocation>
        <location evidence="3">Cell membrane</location>
        <topology evidence="3">Lipid-anchor</topology>
        <topology evidence="3">GPI-anchor</topology>
    </subcellularLocation>
</comment>
<comment type="developmental stage">
    <text>Expressed on zygotes and ookinetes.</text>
</comment>